<reference key="1">
    <citation type="journal article" date="2004" name="Science">
        <title>The complete genome sequence of Propionibacterium acnes, a commensal of human skin.</title>
        <authorList>
            <person name="Brueggemann H."/>
            <person name="Henne A."/>
            <person name="Hoster F."/>
            <person name="Liesegang H."/>
            <person name="Wiezer A."/>
            <person name="Strittmatter A."/>
            <person name="Hujer S."/>
            <person name="Duerre P."/>
            <person name="Gottschalk G."/>
        </authorList>
    </citation>
    <scope>NUCLEOTIDE SEQUENCE [LARGE SCALE GENOMIC DNA]</scope>
    <source>
        <strain>DSM 16379 / KPA171202</strain>
    </source>
</reference>
<feature type="chain" id="PRO_0000230184" description="Phosphoribosyl-ATP pyrophosphatase">
    <location>
        <begin position="1"/>
        <end position="88"/>
    </location>
</feature>
<proteinExistence type="inferred from homology"/>
<protein>
    <recommendedName>
        <fullName evidence="1">Phosphoribosyl-ATP pyrophosphatase</fullName>
        <shortName evidence="1">PRA-PH</shortName>
        <ecNumber evidence="1">3.6.1.31</ecNumber>
    </recommendedName>
</protein>
<organism>
    <name type="scientific">Cutibacterium acnes (strain DSM 16379 / KPA171202)</name>
    <name type="common">Propionibacterium acnes</name>
    <dbReference type="NCBI Taxonomy" id="267747"/>
    <lineage>
        <taxon>Bacteria</taxon>
        <taxon>Bacillati</taxon>
        <taxon>Actinomycetota</taxon>
        <taxon>Actinomycetes</taxon>
        <taxon>Propionibacteriales</taxon>
        <taxon>Propionibacteriaceae</taxon>
        <taxon>Cutibacterium</taxon>
    </lineage>
</organism>
<dbReference type="EC" id="3.6.1.31" evidence="1"/>
<dbReference type="EMBL" id="AE017283">
    <property type="protein sequence ID" value="AAT83168.1"/>
    <property type="molecule type" value="Genomic_DNA"/>
</dbReference>
<dbReference type="RefSeq" id="WP_002514227.1">
    <property type="nucleotide sequence ID" value="NZ_CP025935.1"/>
</dbReference>
<dbReference type="SMR" id="Q6A7U7"/>
<dbReference type="EnsemblBacteria" id="AAT83168">
    <property type="protein sequence ID" value="AAT83168"/>
    <property type="gene ID" value="PPA1418"/>
</dbReference>
<dbReference type="KEGG" id="pac:PPA1418"/>
<dbReference type="eggNOG" id="COG0140">
    <property type="taxonomic scope" value="Bacteria"/>
</dbReference>
<dbReference type="HOGENOM" id="CLU_123337_2_1_11"/>
<dbReference type="UniPathway" id="UPA00031">
    <property type="reaction ID" value="UER00007"/>
</dbReference>
<dbReference type="Proteomes" id="UP000000603">
    <property type="component" value="Chromosome"/>
</dbReference>
<dbReference type="GO" id="GO:0005737">
    <property type="term" value="C:cytoplasm"/>
    <property type="evidence" value="ECO:0007669"/>
    <property type="project" value="UniProtKB-SubCell"/>
</dbReference>
<dbReference type="GO" id="GO:0005524">
    <property type="term" value="F:ATP binding"/>
    <property type="evidence" value="ECO:0007669"/>
    <property type="project" value="UniProtKB-KW"/>
</dbReference>
<dbReference type="GO" id="GO:0004636">
    <property type="term" value="F:phosphoribosyl-ATP diphosphatase activity"/>
    <property type="evidence" value="ECO:0007669"/>
    <property type="project" value="UniProtKB-UniRule"/>
</dbReference>
<dbReference type="GO" id="GO:0000105">
    <property type="term" value="P:L-histidine biosynthetic process"/>
    <property type="evidence" value="ECO:0007669"/>
    <property type="project" value="UniProtKB-UniRule"/>
</dbReference>
<dbReference type="CDD" id="cd11547">
    <property type="entry name" value="NTP-PPase_HisE"/>
    <property type="match status" value="1"/>
</dbReference>
<dbReference type="Gene3D" id="1.10.287.1080">
    <property type="entry name" value="MazG-like"/>
    <property type="match status" value="1"/>
</dbReference>
<dbReference type="HAMAP" id="MF_01020">
    <property type="entry name" value="HisE"/>
    <property type="match status" value="1"/>
</dbReference>
<dbReference type="InterPro" id="IPR008179">
    <property type="entry name" value="HisE"/>
</dbReference>
<dbReference type="InterPro" id="IPR021130">
    <property type="entry name" value="PRib-ATP_PPHydrolase-like"/>
</dbReference>
<dbReference type="NCBIfam" id="TIGR03188">
    <property type="entry name" value="histidine_hisI"/>
    <property type="match status" value="1"/>
</dbReference>
<dbReference type="NCBIfam" id="NF001610">
    <property type="entry name" value="PRK00400.1-1"/>
    <property type="match status" value="1"/>
</dbReference>
<dbReference type="PANTHER" id="PTHR42945">
    <property type="entry name" value="HISTIDINE BIOSYNTHESIS BIFUNCTIONAL PROTEIN"/>
    <property type="match status" value="1"/>
</dbReference>
<dbReference type="PANTHER" id="PTHR42945:SF1">
    <property type="entry name" value="HISTIDINE BIOSYNTHESIS BIFUNCTIONAL PROTEIN HIS7"/>
    <property type="match status" value="1"/>
</dbReference>
<dbReference type="Pfam" id="PF01503">
    <property type="entry name" value="PRA-PH"/>
    <property type="match status" value="1"/>
</dbReference>
<dbReference type="SUPFAM" id="SSF101386">
    <property type="entry name" value="all-alpha NTP pyrophosphatases"/>
    <property type="match status" value="1"/>
</dbReference>
<evidence type="ECO:0000255" key="1">
    <source>
        <dbReference type="HAMAP-Rule" id="MF_01020"/>
    </source>
</evidence>
<keyword id="KW-0028">Amino-acid biosynthesis</keyword>
<keyword id="KW-0067">ATP-binding</keyword>
<keyword id="KW-0963">Cytoplasm</keyword>
<keyword id="KW-0368">Histidine biosynthesis</keyword>
<keyword id="KW-0378">Hydrolase</keyword>
<keyword id="KW-0547">Nucleotide-binding</keyword>
<name>HIS2_CUTAK</name>
<sequence length="88" mass="9944">MSKTFEELFAELAIKSQTRPAGSGTVEELDRGVHAIGKKIVEEASEVWMAAEHEGNERLAEEICQEIYHLQVMMIKQGLSLDDVYKHL</sequence>
<comment type="catalytic activity">
    <reaction evidence="1">
        <text>1-(5-phospho-beta-D-ribosyl)-ATP + H2O = 1-(5-phospho-beta-D-ribosyl)-5'-AMP + diphosphate + H(+)</text>
        <dbReference type="Rhea" id="RHEA:22828"/>
        <dbReference type="ChEBI" id="CHEBI:15377"/>
        <dbReference type="ChEBI" id="CHEBI:15378"/>
        <dbReference type="ChEBI" id="CHEBI:33019"/>
        <dbReference type="ChEBI" id="CHEBI:59457"/>
        <dbReference type="ChEBI" id="CHEBI:73183"/>
        <dbReference type="EC" id="3.6.1.31"/>
    </reaction>
</comment>
<comment type="pathway">
    <text evidence="1">Amino-acid biosynthesis; L-histidine biosynthesis; L-histidine from 5-phospho-alpha-D-ribose 1-diphosphate: step 2/9.</text>
</comment>
<comment type="subcellular location">
    <subcellularLocation>
        <location evidence="1">Cytoplasm</location>
    </subcellularLocation>
</comment>
<comment type="similarity">
    <text evidence="1">Belongs to the PRA-PH family.</text>
</comment>
<gene>
    <name evidence="1" type="primary">hisE</name>
    <name type="ordered locus">PPA1418</name>
</gene>
<accession>Q6A7U7</accession>